<name>3S11H_OPHHA</name>
<reference key="1">
    <citation type="journal article" date="2007" name="FASEB J.">
        <title>Beta-cardiotoxin: a new three-finger toxin from Ophiophagus hannah (king cobra) venom with beta-blocker activity.</title>
        <authorList>
            <person name="Rajagopalan N."/>
            <person name="Pung Y.F."/>
            <person name="Zhu Y.Z."/>
            <person name="Wong P.T.H."/>
            <person name="Kumar P.P."/>
            <person name="Kini R.M."/>
        </authorList>
    </citation>
    <scope>NUCLEOTIDE SEQUENCE [MRNA]</scope>
    <source>
        <tissue>Venom gland</tissue>
    </source>
</reference>
<feature type="signal peptide" evidence="3">
    <location>
        <begin position="1"/>
        <end position="21"/>
    </location>
</feature>
<feature type="chain" id="PRO_0000318905" description="Weak toxin DE-1 homolog 1">
    <location>
        <begin position="22"/>
        <end position="83"/>
    </location>
</feature>
<feature type="disulfide bond" evidence="5">
    <location>
        <begin position="24"/>
        <end position="45"/>
    </location>
</feature>
<feature type="disulfide bond" evidence="5">
    <location>
        <begin position="38"/>
        <end position="62"/>
    </location>
</feature>
<feature type="disulfide bond" evidence="5">
    <location>
        <begin position="64"/>
        <end position="75"/>
    </location>
</feature>
<feature type="disulfide bond" evidence="5">
    <location>
        <begin position="76"/>
        <end position="81"/>
    </location>
</feature>
<feature type="strand" evidence="6">
    <location>
        <begin position="23"/>
        <end position="25"/>
    </location>
</feature>
<feature type="strand" evidence="6">
    <location>
        <begin position="35"/>
        <end position="37"/>
    </location>
</feature>
<feature type="strand" evidence="6">
    <location>
        <begin position="45"/>
        <end position="49"/>
    </location>
</feature>
<feature type="strand" evidence="6">
    <location>
        <begin position="58"/>
        <end position="63"/>
    </location>
</feature>
<feature type="strand" evidence="6">
    <location>
        <begin position="66"/>
        <end position="68"/>
    </location>
</feature>
<feature type="strand" evidence="6">
    <location>
        <begin position="71"/>
        <end position="76"/>
    </location>
</feature>
<dbReference type="EMBL" id="AY354200">
    <property type="protein sequence ID" value="AAR10442.1"/>
    <property type="molecule type" value="mRNA"/>
</dbReference>
<dbReference type="PDB" id="5XWE">
    <property type="method" value="X-ray"/>
    <property type="resolution" value="1.80 A"/>
    <property type="chains" value="A/B=1-83"/>
</dbReference>
<dbReference type="PDBsum" id="5XWE"/>
<dbReference type="SMR" id="Q69CJ8"/>
<dbReference type="TopDownProteomics" id="Q69CJ8"/>
<dbReference type="GO" id="GO:0005576">
    <property type="term" value="C:extracellular region"/>
    <property type="evidence" value="ECO:0007669"/>
    <property type="project" value="UniProtKB-SubCell"/>
</dbReference>
<dbReference type="GO" id="GO:0030550">
    <property type="term" value="F:acetylcholine receptor inhibitor activity"/>
    <property type="evidence" value="ECO:0007669"/>
    <property type="project" value="UniProtKB-KW"/>
</dbReference>
<dbReference type="GO" id="GO:0099106">
    <property type="term" value="F:ion channel regulator activity"/>
    <property type="evidence" value="ECO:0007669"/>
    <property type="project" value="UniProtKB-KW"/>
</dbReference>
<dbReference type="GO" id="GO:0090729">
    <property type="term" value="F:toxin activity"/>
    <property type="evidence" value="ECO:0007669"/>
    <property type="project" value="UniProtKB-KW"/>
</dbReference>
<dbReference type="CDD" id="cd00206">
    <property type="entry name" value="TFP_snake_toxin"/>
    <property type="match status" value="1"/>
</dbReference>
<dbReference type="Gene3D" id="2.10.60.10">
    <property type="entry name" value="CD59"/>
    <property type="match status" value="1"/>
</dbReference>
<dbReference type="InterPro" id="IPR003571">
    <property type="entry name" value="Snake_3FTx"/>
</dbReference>
<dbReference type="InterPro" id="IPR045860">
    <property type="entry name" value="Snake_toxin-like_sf"/>
</dbReference>
<dbReference type="InterPro" id="IPR018354">
    <property type="entry name" value="Snake_toxin_con_site"/>
</dbReference>
<dbReference type="InterPro" id="IPR054131">
    <property type="entry name" value="Toxin_cobra-type"/>
</dbReference>
<dbReference type="Pfam" id="PF21947">
    <property type="entry name" value="Toxin_cobra-type"/>
    <property type="match status" value="1"/>
</dbReference>
<dbReference type="SUPFAM" id="SSF57302">
    <property type="entry name" value="Snake toxin-like"/>
    <property type="match status" value="1"/>
</dbReference>
<dbReference type="PROSITE" id="PS00272">
    <property type="entry name" value="SNAKE_TOXIN"/>
    <property type="match status" value="1"/>
</dbReference>
<proteinExistence type="evidence at protein level"/>
<accession>Q69CJ8</accession>
<keyword id="KW-0002">3D-structure</keyword>
<keyword id="KW-0008">Acetylcholine receptor inhibiting toxin</keyword>
<keyword id="KW-1015">Disulfide bond</keyword>
<keyword id="KW-0872">Ion channel impairing toxin</keyword>
<keyword id="KW-0528">Neurotoxin</keyword>
<keyword id="KW-0629">Postsynaptic neurotoxin</keyword>
<keyword id="KW-0964">Secreted</keyword>
<keyword id="KW-0732">Signal</keyword>
<keyword id="KW-0800">Toxin</keyword>
<sequence>MKPVLLTLVVVTIVCLDLGYTRICLKQEPFQPETTTTCPEGEDACYNLFWSDHSEIKIEMGCGCPKTEPYTNLYCCKIDSCNK</sequence>
<evidence type="ECO:0000250" key="1"/>
<evidence type="ECO:0000250" key="2">
    <source>
        <dbReference type="UniProtKB" id="P60775"/>
    </source>
</evidence>
<evidence type="ECO:0000255" key="3"/>
<evidence type="ECO:0000305" key="4"/>
<evidence type="ECO:0007744" key="5">
    <source>
        <dbReference type="PDB" id="5XWE"/>
    </source>
</evidence>
<evidence type="ECO:0007829" key="6">
    <source>
        <dbReference type="PDB" id="5XWE"/>
    </source>
</evidence>
<protein>
    <recommendedName>
        <fullName>Weak toxin DE-1 homolog 1</fullName>
        <shortName>WTX DE-1 homolog 1</shortName>
    </recommendedName>
</protein>
<organism>
    <name type="scientific">Ophiophagus hannah</name>
    <name type="common">King cobra</name>
    <name type="synonym">Naja hannah</name>
    <dbReference type="NCBI Taxonomy" id="8665"/>
    <lineage>
        <taxon>Eukaryota</taxon>
        <taxon>Metazoa</taxon>
        <taxon>Chordata</taxon>
        <taxon>Craniata</taxon>
        <taxon>Vertebrata</taxon>
        <taxon>Euteleostomi</taxon>
        <taxon>Lepidosauria</taxon>
        <taxon>Squamata</taxon>
        <taxon>Bifurcata</taxon>
        <taxon>Unidentata</taxon>
        <taxon>Episquamata</taxon>
        <taxon>Toxicofera</taxon>
        <taxon>Serpentes</taxon>
        <taxon>Colubroidea</taxon>
        <taxon>Elapidae</taxon>
        <taxon>Elapinae</taxon>
        <taxon>Ophiophagus</taxon>
    </lineage>
</organism>
<comment type="function">
    <text evidence="2">Binds to muscle nicotinic acetylcholine receptor (nAChR) and inhibit acetylcholine from binding to the receptor, thereby impairing neuromuscular transmission.</text>
</comment>
<comment type="subcellular location">
    <subcellularLocation>
        <location evidence="1">Secreted</location>
    </subcellularLocation>
</comment>
<comment type="tissue specificity">
    <text evidence="4">Expressed by the venom gland.</text>
</comment>
<comment type="similarity">
    <text evidence="4">Belongs to the three-finger toxin family. Short-chain subfamily. Type I alpha-neurotoxin sub-subfamily.</text>
</comment>